<comment type="function">
    <text evidence="2 3 4 5">Nucleoside transporter that functions as a pyrimidine nucleoside carrier in all organs. Has high affinity for adenosine and uridine when expressed in a heterologous system (yeast). Mediates proton-dependent adenosine or uridine transport in Xenopus oocytes.</text>
</comment>
<comment type="biophysicochemical properties">
    <kinetics>
        <KM evidence="2 3 4">2.9 uM for adenosine</KM>
        <KM evidence="2 3 4">3.2 uM for uridine</KM>
        <KM evidence="2 3 4">18 uM for guanosine</KM>
        <KM evidence="2 3 4">10.8 uM for cytidine</KM>
        <Vmax evidence="2 3 4">270.0 pmol/min/mg enzyme toward adenosine</Vmax>
        <Vmax evidence="2 3 4">233.0 pmol/min/mg enzyme toward uridine</Vmax>
    </kinetics>
</comment>
<comment type="subcellular location">
    <subcellularLocation>
        <location evidence="10">Cell membrane</location>
        <topology evidence="10">Multi-pass membrane protein</topology>
    </subcellularLocation>
    <text evidence="10">Plasma membrane.</text>
</comment>
<comment type="tissue specificity">
    <text evidence="2 4 5">Expressed in root tips, vasculature of roots and leaves, and meristems of leaf primordia. Expressed in flowers and siliques.</text>
</comment>
<comment type="induction">
    <text evidence="2">By nitrogen deficiency and 5-fluorouracil plus methotrexate.</text>
</comment>
<comment type="disruption phenotype">
    <text evidence="6">The isolated apoplastic sap extracted from the double mutant missing both NSH3 and ENT3 lacks the ability to catalyze the conversion of inosine in hypoxanthine; this double mutant is unable to grow on medium containing inosine as sole nitrogen source, in addition plants are more sensitive to the necrotrophic fungus Botrytis cinerea BMM but are resistant to the cytotoxic adenosine analog 2-chloro-adenosine (CADO) and to 5-fluoro-uridine.</text>
</comment>
<comment type="similarity">
    <text evidence="9">Belongs to the SLC29A/ENT transporter (TC 2.A.57) family.</text>
</comment>
<accession>Q9M0Y3</accession>
<gene>
    <name evidence="7" type="primary">ENT3</name>
    <name evidence="8" type="synonym">FUR1</name>
    <name evidence="11" type="ordered locus">At4g05120</name>
    <name type="ORF">C17L7.40</name>
    <name evidence="12" type="ORF">T32N4</name>
</gene>
<reference key="1">
    <citation type="journal article" date="2003" name="J. Biol. Chem.">
        <title>Equilibrative nucleoside transporters of Arabidopsis thaliana. cDNA cloning, expression pattern, and analysis of transport activities.</title>
        <authorList>
            <person name="Li G."/>
            <person name="Liu K."/>
            <person name="Baldwin S.A."/>
            <person name="Wang D."/>
        </authorList>
    </citation>
    <scope>NUCLEOTIDE SEQUENCE [MRNA]</scope>
    <scope>FUNCTION</scope>
    <scope>BIOPHYSICOCHEMICAL PROPERTIES</scope>
    <scope>SUBCELLULAR LOCATION</scope>
    <scope>TISSUE SPECIFICITY</scope>
    <scope>INDUCTION</scope>
</reference>
<reference key="2">
    <citation type="journal article" date="1999" name="Nature">
        <title>Sequence and analysis of chromosome 4 of the plant Arabidopsis thaliana.</title>
        <authorList>
            <person name="Mayer K.F.X."/>
            <person name="Schueller C."/>
            <person name="Wambutt R."/>
            <person name="Murphy G."/>
            <person name="Volckaert G."/>
            <person name="Pohl T."/>
            <person name="Duesterhoeft A."/>
            <person name="Stiekema W."/>
            <person name="Entian K.-D."/>
            <person name="Terryn N."/>
            <person name="Harris B."/>
            <person name="Ansorge W."/>
            <person name="Brandt P."/>
            <person name="Grivell L.A."/>
            <person name="Rieger M."/>
            <person name="Weichselgartner M."/>
            <person name="de Simone V."/>
            <person name="Obermaier B."/>
            <person name="Mache R."/>
            <person name="Mueller M."/>
            <person name="Kreis M."/>
            <person name="Delseny M."/>
            <person name="Puigdomenech P."/>
            <person name="Watson M."/>
            <person name="Schmidtheini T."/>
            <person name="Reichert B."/>
            <person name="Portetelle D."/>
            <person name="Perez-Alonso M."/>
            <person name="Boutry M."/>
            <person name="Bancroft I."/>
            <person name="Vos P."/>
            <person name="Hoheisel J."/>
            <person name="Zimmermann W."/>
            <person name="Wedler H."/>
            <person name="Ridley P."/>
            <person name="Langham S.-A."/>
            <person name="McCullagh B."/>
            <person name="Bilham L."/>
            <person name="Robben J."/>
            <person name="van der Schueren J."/>
            <person name="Grymonprez B."/>
            <person name="Chuang Y.-J."/>
            <person name="Vandenbussche F."/>
            <person name="Braeken M."/>
            <person name="Weltjens I."/>
            <person name="Voet M."/>
            <person name="Bastiaens I."/>
            <person name="Aert R."/>
            <person name="Defoor E."/>
            <person name="Weitzenegger T."/>
            <person name="Bothe G."/>
            <person name="Ramsperger U."/>
            <person name="Hilbert H."/>
            <person name="Braun M."/>
            <person name="Holzer E."/>
            <person name="Brandt A."/>
            <person name="Peters S."/>
            <person name="van Staveren M."/>
            <person name="Dirkse W."/>
            <person name="Mooijman P."/>
            <person name="Klein Lankhorst R."/>
            <person name="Rose M."/>
            <person name="Hauf J."/>
            <person name="Koetter P."/>
            <person name="Berneiser S."/>
            <person name="Hempel S."/>
            <person name="Feldpausch M."/>
            <person name="Lamberth S."/>
            <person name="Van den Daele H."/>
            <person name="De Keyser A."/>
            <person name="Buysshaert C."/>
            <person name="Gielen J."/>
            <person name="Villarroel R."/>
            <person name="De Clercq R."/>
            <person name="van Montagu M."/>
            <person name="Rogers J."/>
            <person name="Cronin A."/>
            <person name="Quail M.A."/>
            <person name="Bray-Allen S."/>
            <person name="Clark L."/>
            <person name="Doggett J."/>
            <person name="Hall S."/>
            <person name="Kay M."/>
            <person name="Lennard N."/>
            <person name="McLay K."/>
            <person name="Mayes R."/>
            <person name="Pettett A."/>
            <person name="Rajandream M.A."/>
            <person name="Lyne M."/>
            <person name="Benes V."/>
            <person name="Rechmann S."/>
            <person name="Borkova D."/>
            <person name="Bloecker H."/>
            <person name="Scharfe M."/>
            <person name="Grimm M."/>
            <person name="Loehnert T.-H."/>
            <person name="Dose S."/>
            <person name="de Haan M."/>
            <person name="Maarse A.C."/>
            <person name="Schaefer M."/>
            <person name="Mueller-Auer S."/>
            <person name="Gabel C."/>
            <person name="Fuchs M."/>
            <person name="Fartmann B."/>
            <person name="Granderath K."/>
            <person name="Dauner D."/>
            <person name="Herzl A."/>
            <person name="Neumann S."/>
            <person name="Argiriou A."/>
            <person name="Vitale D."/>
            <person name="Liguori R."/>
            <person name="Piravandi E."/>
            <person name="Massenet O."/>
            <person name="Quigley F."/>
            <person name="Clabauld G."/>
            <person name="Muendlein A."/>
            <person name="Felber R."/>
            <person name="Schnabl S."/>
            <person name="Hiller R."/>
            <person name="Schmidt W."/>
            <person name="Lecharny A."/>
            <person name="Aubourg S."/>
            <person name="Chefdor F."/>
            <person name="Cooke R."/>
            <person name="Berger C."/>
            <person name="Monfort A."/>
            <person name="Casacuberta E."/>
            <person name="Gibbons T."/>
            <person name="Weber N."/>
            <person name="Vandenbol M."/>
            <person name="Bargues M."/>
            <person name="Terol J."/>
            <person name="Torres A."/>
            <person name="Perez-Perez A."/>
            <person name="Purnelle B."/>
            <person name="Bent E."/>
            <person name="Johnson S."/>
            <person name="Tacon D."/>
            <person name="Jesse T."/>
            <person name="Heijnen L."/>
            <person name="Schwarz S."/>
            <person name="Scholler P."/>
            <person name="Heber S."/>
            <person name="Francs P."/>
            <person name="Bielke C."/>
            <person name="Frishman D."/>
            <person name="Haase D."/>
            <person name="Lemcke K."/>
            <person name="Mewes H.-W."/>
            <person name="Stocker S."/>
            <person name="Zaccaria P."/>
            <person name="Bevan M."/>
            <person name="Wilson R.K."/>
            <person name="de la Bastide M."/>
            <person name="Habermann K."/>
            <person name="Parnell L."/>
            <person name="Dedhia N."/>
            <person name="Gnoj L."/>
            <person name="Schutz K."/>
            <person name="Huang E."/>
            <person name="Spiegel L."/>
            <person name="Sekhon M."/>
            <person name="Murray J."/>
            <person name="Sheet P."/>
            <person name="Cordes M."/>
            <person name="Abu-Threideh J."/>
            <person name="Stoneking T."/>
            <person name="Kalicki J."/>
            <person name="Graves T."/>
            <person name="Harmon G."/>
            <person name="Edwards J."/>
            <person name="Latreille P."/>
            <person name="Courtney L."/>
            <person name="Cloud J."/>
            <person name="Abbott A."/>
            <person name="Scott K."/>
            <person name="Johnson D."/>
            <person name="Minx P."/>
            <person name="Bentley D."/>
            <person name="Fulton B."/>
            <person name="Miller N."/>
            <person name="Greco T."/>
            <person name="Kemp K."/>
            <person name="Kramer J."/>
            <person name="Fulton L."/>
            <person name="Mardis E."/>
            <person name="Dante M."/>
            <person name="Pepin K."/>
            <person name="Hillier L.W."/>
            <person name="Nelson J."/>
            <person name="Spieth J."/>
            <person name="Ryan E."/>
            <person name="Andrews S."/>
            <person name="Geisel C."/>
            <person name="Layman D."/>
            <person name="Du H."/>
            <person name="Ali J."/>
            <person name="Berghoff A."/>
            <person name="Jones K."/>
            <person name="Drone K."/>
            <person name="Cotton M."/>
            <person name="Joshu C."/>
            <person name="Antonoiu B."/>
            <person name="Zidanic M."/>
            <person name="Strong C."/>
            <person name="Sun H."/>
            <person name="Lamar B."/>
            <person name="Yordan C."/>
            <person name="Ma P."/>
            <person name="Zhong J."/>
            <person name="Preston R."/>
            <person name="Vil D."/>
            <person name="Shekher M."/>
            <person name="Matero A."/>
            <person name="Shah R."/>
            <person name="Swaby I.K."/>
            <person name="O'Shaughnessy A."/>
            <person name="Rodriguez M."/>
            <person name="Hoffman J."/>
            <person name="Till S."/>
            <person name="Granat S."/>
            <person name="Shohdy N."/>
            <person name="Hasegawa A."/>
            <person name="Hameed A."/>
            <person name="Lodhi M."/>
            <person name="Johnson A."/>
            <person name="Chen E."/>
            <person name="Marra M.A."/>
            <person name="Martienssen R."/>
            <person name="McCombie W.R."/>
        </authorList>
    </citation>
    <scope>NUCLEOTIDE SEQUENCE [LARGE SCALE GENOMIC DNA]</scope>
    <source>
        <strain>cv. Columbia</strain>
    </source>
</reference>
<reference key="3">
    <citation type="journal article" date="2017" name="Plant J.">
        <title>Araport11: a complete reannotation of the Arabidopsis thaliana reference genome.</title>
        <authorList>
            <person name="Cheng C.Y."/>
            <person name="Krishnakumar V."/>
            <person name="Chan A.P."/>
            <person name="Thibaud-Nissen F."/>
            <person name="Schobel S."/>
            <person name="Town C.D."/>
        </authorList>
    </citation>
    <scope>GENOME REANNOTATION</scope>
    <source>
        <strain>cv. Columbia</strain>
    </source>
</reference>
<reference key="4">
    <citation type="submission" date="2004-09" db="EMBL/GenBank/DDBJ databases">
        <title>Large-scale analysis of RIKEN Arabidopsis full-length (RAFL) cDNAs.</title>
        <authorList>
            <person name="Totoki Y."/>
            <person name="Seki M."/>
            <person name="Ishida J."/>
            <person name="Nakajima M."/>
            <person name="Enju A."/>
            <person name="Kamiya A."/>
            <person name="Narusaka M."/>
            <person name="Shin-i T."/>
            <person name="Nakagawa M."/>
            <person name="Sakamoto N."/>
            <person name="Oishi K."/>
            <person name="Kohara Y."/>
            <person name="Kobayashi M."/>
            <person name="Toyoda A."/>
            <person name="Sakaki Y."/>
            <person name="Sakurai T."/>
            <person name="Iida K."/>
            <person name="Akiyama K."/>
            <person name="Satou M."/>
            <person name="Toyoda T."/>
            <person name="Konagaya A."/>
            <person name="Carninci P."/>
            <person name="Kawai J."/>
            <person name="Hayashizaki Y."/>
            <person name="Shinozaki K."/>
        </authorList>
    </citation>
    <scope>NUCLEOTIDE SEQUENCE [LARGE SCALE MRNA]</scope>
    <source>
        <strain>cv. Columbia</strain>
    </source>
</reference>
<reference key="5">
    <citation type="journal article" date="2004" name="Biochem. J.">
        <title>Characterization of three novel members of the Arabidopsis thaliana equilibrative nucleoside transporter (ENT) family.</title>
        <authorList>
            <person name="Wormit A."/>
            <person name="Traub M."/>
            <person name="Floerchinger M."/>
            <person name="Neuhaus H.E."/>
            <person name="Moehlmann T."/>
        </authorList>
    </citation>
    <scope>FUNCTION</scope>
    <scope>BIOPHYSICOCHEMICAL PROPERTIES</scope>
</reference>
<reference key="6">
    <citation type="journal article" date="2007" name="Plant J.">
        <title>The fluorouridine insensitive 1 (fur1) mutant is defective in equilibrative nucleoside transporter 3 (ENT3), and thus represents an important pyrimidine nucleoside uptake system in Arabidopsis thaliana.</title>
        <authorList>
            <person name="Traub M."/>
            <person name="Floerchinger M."/>
            <person name="Piecuch J."/>
            <person name="Kunz H.H."/>
            <person name="Weise-Steinmetz A."/>
            <person name="Deitmer J.W."/>
            <person name="Ekkehard Neuhaus H."/>
            <person name="Moehlmann T."/>
        </authorList>
    </citation>
    <scope>FUNCTION</scope>
    <scope>BIOPHYSICOCHEMICAL PROPERTIES</scope>
    <scope>TISSUE SPECIFICITY</scope>
    <scope>MUTAGENESIS OF GLY-281</scope>
</reference>
<reference key="7">
    <citation type="journal article" date="2012" name="Plant Biol.">
        <title>Nucleoside transport across the plasma membrane mediated by equilibrative nucleoside transporter 3 influences metabolism of Arabidopsis seedlings.</title>
        <authorList>
            <person name="Cornelius S."/>
            <person name="Traub M."/>
            <person name="Bernard C."/>
            <person name="Salzig C."/>
            <person name="Lang P."/>
            <person name="Moehlmann T."/>
        </authorList>
    </citation>
    <scope>FUNCTION</scope>
    <scope>TISSUE SPECIFICITY</scope>
</reference>
<reference key="8">
    <citation type="journal article" date="2015" name="Front. Plant Sci.">
        <title>Apoplastic nucleoside accumulation in Arabidopsis leads to reduced photosynthetic performance and increased susceptibility against Botrytis cinerea.</title>
        <authorList>
            <person name="Daumann M."/>
            <person name="Fischer M."/>
            <person name="Niopek-Witz S."/>
            <person name="Girke C."/>
            <person name="Moehlmann T."/>
        </authorList>
    </citation>
    <scope>DISRUPTION PHENOTYPE</scope>
    <source>
        <strain>cv. Columbia</strain>
    </source>
</reference>
<protein>
    <recommendedName>
        <fullName evidence="7">Equilibrative nucleotide transporter 3</fullName>
        <shortName evidence="7">AtENT3</shortName>
    </recommendedName>
    <alternativeName>
        <fullName evidence="7">Nucleoside transporter ENT3</fullName>
    </alternativeName>
    <alternativeName>
        <fullName evidence="8">Protein FLUOROURIDINE RESISTANT 1</fullName>
    </alternativeName>
</protein>
<dbReference type="EMBL" id="AF426400">
    <property type="protein sequence ID" value="AAL25096.1"/>
    <property type="molecule type" value="mRNA"/>
</dbReference>
<dbReference type="EMBL" id="AF162444">
    <property type="status" value="NOT_ANNOTATED_CDS"/>
    <property type="molecule type" value="Genomic_DNA"/>
</dbReference>
<dbReference type="EMBL" id="AL161502">
    <property type="protein sequence ID" value="CAB81054.1"/>
    <property type="molecule type" value="Genomic_DNA"/>
</dbReference>
<dbReference type="EMBL" id="CP002687">
    <property type="protein sequence ID" value="AEE82481.1"/>
    <property type="molecule type" value="Genomic_DNA"/>
</dbReference>
<dbReference type="EMBL" id="CP002687">
    <property type="protein sequence ID" value="ANM68013.1"/>
    <property type="molecule type" value="Genomic_DNA"/>
</dbReference>
<dbReference type="EMBL" id="AK175753">
    <property type="protein sequence ID" value="BAD43516.1"/>
    <property type="molecule type" value="mRNA"/>
</dbReference>
<dbReference type="PIR" id="D85064">
    <property type="entry name" value="D85064"/>
</dbReference>
<dbReference type="RefSeq" id="NP_001329797.1">
    <property type="nucleotide sequence ID" value="NM_001340534.1"/>
</dbReference>
<dbReference type="RefSeq" id="NP_192421.1">
    <property type="nucleotide sequence ID" value="NM_116751.4"/>
</dbReference>
<dbReference type="SMR" id="Q9M0Y3"/>
<dbReference type="FunCoup" id="Q9M0Y3">
    <property type="interactions" value="406"/>
</dbReference>
<dbReference type="STRING" id="3702.Q9M0Y3"/>
<dbReference type="TCDB" id="2.A.57.1.7">
    <property type="family name" value="the equilibrative nucleoside transporter (ent) family"/>
</dbReference>
<dbReference type="PaxDb" id="3702-AT4G05120.1"/>
<dbReference type="ProteomicsDB" id="222288"/>
<dbReference type="EnsemblPlants" id="AT4G05120.1">
    <property type="protein sequence ID" value="AT4G05120.1"/>
    <property type="gene ID" value="AT4G05120"/>
</dbReference>
<dbReference type="EnsemblPlants" id="AT4G05120.2">
    <property type="protein sequence ID" value="AT4G05120.2"/>
    <property type="gene ID" value="AT4G05120"/>
</dbReference>
<dbReference type="GeneID" id="825857"/>
<dbReference type="Gramene" id="AT4G05120.1">
    <property type="protein sequence ID" value="AT4G05120.1"/>
    <property type="gene ID" value="AT4G05120"/>
</dbReference>
<dbReference type="Gramene" id="AT4G05120.2">
    <property type="protein sequence ID" value="AT4G05120.2"/>
    <property type="gene ID" value="AT4G05120"/>
</dbReference>
<dbReference type="KEGG" id="ath:AT4G05120"/>
<dbReference type="Araport" id="AT4G05120"/>
<dbReference type="TAIR" id="AT4G05120">
    <property type="gene designation" value="FUR1"/>
</dbReference>
<dbReference type="eggNOG" id="KOG1479">
    <property type="taxonomic scope" value="Eukaryota"/>
</dbReference>
<dbReference type="HOGENOM" id="CLU_021611_5_1_1"/>
<dbReference type="InParanoid" id="Q9M0Y3"/>
<dbReference type="OMA" id="GMVVCWI"/>
<dbReference type="PhylomeDB" id="Q9M0Y3"/>
<dbReference type="SABIO-RK" id="Q9M0Y3"/>
<dbReference type="PRO" id="PR:Q9M0Y3"/>
<dbReference type="Proteomes" id="UP000006548">
    <property type="component" value="Chromosome 4"/>
</dbReference>
<dbReference type="ExpressionAtlas" id="Q9M0Y3">
    <property type="expression patterns" value="baseline and differential"/>
</dbReference>
<dbReference type="GO" id="GO:0005886">
    <property type="term" value="C:plasma membrane"/>
    <property type="evidence" value="ECO:0007669"/>
    <property type="project" value="UniProtKB-SubCell"/>
</dbReference>
<dbReference type="GO" id="GO:0005337">
    <property type="term" value="F:nucleoside transmembrane transporter activity"/>
    <property type="evidence" value="ECO:0000315"/>
    <property type="project" value="TAIR"/>
</dbReference>
<dbReference type="GO" id="GO:0015858">
    <property type="term" value="P:nucleoside transport"/>
    <property type="evidence" value="ECO:0000315"/>
    <property type="project" value="TAIR"/>
</dbReference>
<dbReference type="InterPro" id="IPR002259">
    <property type="entry name" value="Eqnu_transpt"/>
</dbReference>
<dbReference type="InterPro" id="IPR036259">
    <property type="entry name" value="MFS_trans_sf"/>
</dbReference>
<dbReference type="PANTHER" id="PTHR10332">
    <property type="entry name" value="EQUILIBRATIVE NUCLEOSIDE TRANSPORTER"/>
    <property type="match status" value="1"/>
</dbReference>
<dbReference type="PANTHER" id="PTHR10332:SF38">
    <property type="entry name" value="EQUILIBRATIVE NUCLEOTIDE TRANSPORTER 3-RELATED"/>
    <property type="match status" value="1"/>
</dbReference>
<dbReference type="Pfam" id="PF01733">
    <property type="entry name" value="Nucleoside_tran"/>
    <property type="match status" value="1"/>
</dbReference>
<dbReference type="PIRSF" id="PIRSF016379">
    <property type="entry name" value="ENT"/>
    <property type="match status" value="1"/>
</dbReference>
<dbReference type="SUPFAM" id="SSF103473">
    <property type="entry name" value="MFS general substrate transporter"/>
    <property type="match status" value="1"/>
</dbReference>
<name>ENT3_ARATH</name>
<evidence type="ECO:0000255" key="1"/>
<evidence type="ECO:0000269" key="2">
    <source>
    </source>
</evidence>
<evidence type="ECO:0000269" key="3">
    <source>
    </source>
</evidence>
<evidence type="ECO:0000269" key="4">
    <source>
    </source>
</evidence>
<evidence type="ECO:0000269" key="5">
    <source>
    </source>
</evidence>
<evidence type="ECO:0000269" key="6">
    <source>
    </source>
</evidence>
<evidence type="ECO:0000303" key="7">
    <source>
    </source>
</evidence>
<evidence type="ECO:0000303" key="8">
    <source>
    </source>
</evidence>
<evidence type="ECO:0000305" key="9"/>
<evidence type="ECO:0000305" key="10">
    <source>
    </source>
</evidence>
<evidence type="ECO:0000312" key="11">
    <source>
        <dbReference type="Araport" id="AT4G05120"/>
    </source>
</evidence>
<evidence type="ECO:0000312" key="12">
    <source>
        <dbReference type="EMBL" id="AF162444"/>
    </source>
</evidence>
<proteinExistence type="evidence at protein level"/>
<keyword id="KW-1003">Cell membrane</keyword>
<keyword id="KW-0472">Membrane</keyword>
<keyword id="KW-1185">Reference proteome</keyword>
<keyword id="KW-0812">Transmembrane</keyword>
<keyword id="KW-1133">Transmembrane helix</keyword>
<keyword id="KW-0813">Transport</keyword>
<organism>
    <name type="scientific">Arabidopsis thaliana</name>
    <name type="common">Mouse-ear cress</name>
    <dbReference type="NCBI Taxonomy" id="3702"/>
    <lineage>
        <taxon>Eukaryota</taxon>
        <taxon>Viridiplantae</taxon>
        <taxon>Streptophyta</taxon>
        <taxon>Embryophyta</taxon>
        <taxon>Tracheophyta</taxon>
        <taxon>Spermatophyta</taxon>
        <taxon>Magnoliopsida</taxon>
        <taxon>eudicotyledons</taxon>
        <taxon>Gunneridae</taxon>
        <taxon>Pentapetalae</taxon>
        <taxon>rosids</taxon>
        <taxon>malvids</taxon>
        <taxon>Brassicales</taxon>
        <taxon>Brassicaceae</taxon>
        <taxon>Camelineae</taxon>
        <taxon>Arabidopsis</taxon>
    </lineage>
</organism>
<sequence length="418" mass="46208">MADRYENQPPEKLQGKYQAMVVCCILGIGSLVSWNSMLTIADYYYKVFPDYHPSRVLTLVYQPFALGTILILAYHESKINTRKRNLIGYILFTISTFLLIVLDLATKGRGGIGPYIGLCAVVASFGLADATVQGGMIGDLSLMCPELVQSFMGGLAVSGALTSALRLITKAAFEKTNDGPRKGAMMFLAISTCIELLCVFLYAYVFPKLPIVKYYRRKAASEGSKTVSADLAAAGIQNQSDLTDDDSKNQRLSNKELLIQNIDYAVNLFLIYVCTLSIFPGFLYENTGQHGLGDWYALVLVAMYNCWDLVGRYTPLVKWLKIENRKLITIAVLSRYLLIPAFYFTAKYGDQGWMIMLISVLGLTNGHLTVCIMTIAPKGYKGPEQNALGNLLVIFLLGGIFAGVALDWLWLIGKKNAF</sequence>
<feature type="chain" id="PRO_0000419156" description="Equilibrative nucleotide transporter 3">
    <location>
        <begin position="1"/>
        <end position="418"/>
    </location>
</feature>
<feature type="transmembrane region" description="Helical" evidence="1">
    <location>
        <begin position="20"/>
        <end position="40"/>
    </location>
</feature>
<feature type="transmembrane region" description="Helical" evidence="1">
    <location>
        <begin position="56"/>
        <end position="76"/>
    </location>
</feature>
<feature type="transmembrane region" description="Helical" evidence="1">
    <location>
        <begin position="86"/>
        <end position="106"/>
    </location>
</feature>
<feature type="transmembrane region" description="Helical" evidence="1">
    <location>
        <begin position="112"/>
        <end position="132"/>
    </location>
</feature>
<feature type="transmembrane region" description="Helical" evidence="1">
    <location>
        <begin position="142"/>
        <end position="162"/>
    </location>
</feature>
<feature type="transmembrane region" description="Helical" evidence="1">
    <location>
        <begin position="186"/>
        <end position="206"/>
    </location>
</feature>
<feature type="transmembrane region" description="Helical" evidence="1">
    <location>
        <begin position="264"/>
        <end position="284"/>
    </location>
</feature>
<feature type="transmembrane region" description="Helical" evidence="1">
    <location>
        <begin position="291"/>
        <end position="311"/>
    </location>
</feature>
<feature type="transmembrane region" description="Helical" evidence="1">
    <location>
        <begin position="326"/>
        <end position="346"/>
    </location>
</feature>
<feature type="transmembrane region" description="Helical" evidence="1">
    <location>
        <begin position="353"/>
        <end position="373"/>
    </location>
</feature>
<feature type="transmembrane region" description="Helical" evidence="1">
    <location>
        <begin position="392"/>
        <end position="412"/>
    </location>
</feature>
<feature type="mutagenesis site" description="In fur1; confers growth resistance to the toxic compound fluorouridine." evidence="4">
    <original>G</original>
    <variation>R</variation>
    <location>
        <position position="281"/>
    </location>
</feature>